<dbReference type="EC" id="2.7.7.6" evidence="1"/>
<dbReference type="EMBL" id="AL591981">
    <property type="protein sequence ID" value="CAC99904.1"/>
    <property type="molecule type" value="Genomic_DNA"/>
</dbReference>
<dbReference type="PIR" id="AB1303">
    <property type="entry name" value="AB1303"/>
</dbReference>
<dbReference type="RefSeq" id="NP_465351.1">
    <property type="nucleotide sequence ID" value="NC_003210.1"/>
</dbReference>
<dbReference type="RefSeq" id="WP_003728294.1">
    <property type="nucleotide sequence ID" value="NZ_CP149495.1"/>
</dbReference>
<dbReference type="SMR" id="Q8Y673"/>
<dbReference type="STRING" id="169963.gene:17594511"/>
<dbReference type="PaxDb" id="169963-lmo1826"/>
<dbReference type="EnsemblBacteria" id="CAC99904">
    <property type="protein sequence ID" value="CAC99904"/>
    <property type="gene ID" value="CAC99904"/>
</dbReference>
<dbReference type="GeneID" id="93239737"/>
<dbReference type="GeneID" id="985894"/>
<dbReference type="KEGG" id="lmo:lmo1826"/>
<dbReference type="PATRIC" id="fig|169963.11.peg.1871"/>
<dbReference type="eggNOG" id="COG1758">
    <property type="taxonomic scope" value="Bacteria"/>
</dbReference>
<dbReference type="HOGENOM" id="CLU_125406_6_0_9"/>
<dbReference type="OrthoDB" id="9815459at2"/>
<dbReference type="PhylomeDB" id="Q8Y673"/>
<dbReference type="BioCyc" id="LMON169963:LMO1826-MONOMER"/>
<dbReference type="Proteomes" id="UP000000817">
    <property type="component" value="Chromosome"/>
</dbReference>
<dbReference type="GO" id="GO:0000345">
    <property type="term" value="C:cytosolic DNA-directed RNA polymerase complex"/>
    <property type="evidence" value="ECO:0000318"/>
    <property type="project" value="GO_Central"/>
</dbReference>
<dbReference type="GO" id="GO:0001000">
    <property type="term" value="F:bacterial-type RNA polymerase core enzyme binding"/>
    <property type="evidence" value="ECO:0000318"/>
    <property type="project" value="GO_Central"/>
</dbReference>
<dbReference type="GO" id="GO:0003677">
    <property type="term" value="F:DNA binding"/>
    <property type="evidence" value="ECO:0007669"/>
    <property type="project" value="UniProtKB-UniRule"/>
</dbReference>
<dbReference type="GO" id="GO:0003899">
    <property type="term" value="F:DNA-directed RNA polymerase activity"/>
    <property type="evidence" value="ECO:0007669"/>
    <property type="project" value="UniProtKB-UniRule"/>
</dbReference>
<dbReference type="GO" id="GO:0006352">
    <property type="term" value="P:DNA-templated transcription initiation"/>
    <property type="evidence" value="ECO:0000318"/>
    <property type="project" value="GO_Central"/>
</dbReference>
<dbReference type="Gene3D" id="3.90.940.10">
    <property type="match status" value="1"/>
</dbReference>
<dbReference type="HAMAP" id="MF_00366">
    <property type="entry name" value="RNApol_bact_RpoZ"/>
    <property type="match status" value="1"/>
</dbReference>
<dbReference type="InterPro" id="IPR003716">
    <property type="entry name" value="DNA-dir_RNA_pol_omega"/>
</dbReference>
<dbReference type="InterPro" id="IPR006110">
    <property type="entry name" value="Pol_omega/Rpo6/RPB6"/>
</dbReference>
<dbReference type="InterPro" id="IPR036161">
    <property type="entry name" value="RPB6/omega-like_sf"/>
</dbReference>
<dbReference type="NCBIfam" id="TIGR00690">
    <property type="entry name" value="rpoZ"/>
    <property type="match status" value="1"/>
</dbReference>
<dbReference type="PANTHER" id="PTHR34476">
    <property type="entry name" value="DNA-DIRECTED RNA POLYMERASE SUBUNIT OMEGA"/>
    <property type="match status" value="1"/>
</dbReference>
<dbReference type="PANTHER" id="PTHR34476:SF1">
    <property type="entry name" value="DNA-DIRECTED RNA POLYMERASE SUBUNIT OMEGA"/>
    <property type="match status" value="1"/>
</dbReference>
<dbReference type="Pfam" id="PF01192">
    <property type="entry name" value="RNA_pol_Rpb6"/>
    <property type="match status" value="1"/>
</dbReference>
<dbReference type="SMART" id="SM01409">
    <property type="entry name" value="RNA_pol_Rpb6"/>
    <property type="match status" value="1"/>
</dbReference>
<dbReference type="SUPFAM" id="SSF63562">
    <property type="entry name" value="RPB6/omega subunit-like"/>
    <property type="match status" value="1"/>
</dbReference>
<proteinExistence type="inferred from homology"/>
<sequence>MLYPSIDNLLLKIDSKYSLVTVAAKRARYMQLENDKGVLPSYQSDKFVGKALEEIHAGKLVLQNDDK</sequence>
<reference key="1">
    <citation type="journal article" date="2001" name="Science">
        <title>Comparative genomics of Listeria species.</title>
        <authorList>
            <person name="Glaser P."/>
            <person name="Frangeul L."/>
            <person name="Buchrieser C."/>
            <person name="Rusniok C."/>
            <person name="Amend A."/>
            <person name="Baquero F."/>
            <person name="Berche P."/>
            <person name="Bloecker H."/>
            <person name="Brandt P."/>
            <person name="Chakraborty T."/>
            <person name="Charbit A."/>
            <person name="Chetouani F."/>
            <person name="Couve E."/>
            <person name="de Daruvar A."/>
            <person name="Dehoux P."/>
            <person name="Domann E."/>
            <person name="Dominguez-Bernal G."/>
            <person name="Duchaud E."/>
            <person name="Durant L."/>
            <person name="Dussurget O."/>
            <person name="Entian K.-D."/>
            <person name="Fsihi H."/>
            <person name="Garcia-del Portillo F."/>
            <person name="Garrido P."/>
            <person name="Gautier L."/>
            <person name="Goebel W."/>
            <person name="Gomez-Lopez N."/>
            <person name="Hain T."/>
            <person name="Hauf J."/>
            <person name="Jackson D."/>
            <person name="Jones L.-M."/>
            <person name="Kaerst U."/>
            <person name="Kreft J."/>
            <person name="Kuhn M."/>
            <person name="Kunst F."/>
            <person name="Kurapkat G."/>
            <person name="Madueno E."/>
            <person name="Maitournam A."/>
            <person name="Mata Vicente J."/>
            <person name="Ng E."/>
            <person name="Nedjari H."/>
            <person name="Nordsiek G."/>
            <person name="Novella S."/>
            <person name="de Pablos B."/>
            <person name="Perez-Diaz J.-C."/>
            <person name="Purcell R."/>
            <person name="Remmel B."/>
            <person name="Rose M."/>
            <person name="Schlueter T."/>
            <person name="Simoes N."/>
            <person name="Tierrez A."/>
            <person name="Vazquez-Boland J.-A."/>
            <person name="Voss H."/>
            <person name="Wehland J."/>
            <person name="Cossart P."/>
        </authorList>
    </citation>
    <scope>NUCLEOTIDE SEQUENCE [LARGE SCALE GENOMIC DNA]</scope>
    <source>
        <strain>ATCC BAA-679 / EGD-e</strain>
    </source>
</reference>
<gene>
    <name evidence="1" type="primary">rpoZ</name>
    <name type="ordered locus">lmo1826</name>
</gene>
<name>RPOZ_LISMO</name>
<accession>Q8Y673</accession>
<comment type="function">
    <text evidence="1">Promotes RNA polymerase assembly. Latches the N- and C-terminal regions of the beta' subunit thereby facilitating its interaction with the beta and alpha subunits.</text>
</comment>
<comment type="catalytic activity">
    <reaction evidence="1">
        <text>RNA(n) + a ribonucleoside 5'-triphosphate = RNA(n+1) + diphosphate</text>
        <dbReference type="Rhea" id="RHEA:21248"/>
        <dbReference type="Rhea" id="RHEA-COMP:14527"/>
        <dbReference type="Rhea" id="RHEA-COMP:17342"/>
        <dbReference type="ChEBI" id="CHEBI:33019"/>
        <dbReference type="ChEBI" id="CHEBI:61557"/>
        <dbReference type="ChEBI" id="CHEBI:140395"/>
        <dbReference type="EC" id="2.7.7.6"/>
    </reaction>
</comment>
<comment type="subunit">
    <text evidence="1">The RNAP catalytic core consists of 2 alpha, 1 beta, 1 beta' and 1 omega subunit. When a sigma factor is associated with the core the holoenzyme is formed, which can initiate transcription.</text>
</comment>
<comment type="similarity">
    <text evidence="1">Belongs to the RNA polymerase subunit omega family.</text>
</comment>
<evidence type="ECO:0000255" key="1">
    <source>
        <dbReference type="HAMAP-Rule" id="MF_00366"/>
    </source>
</evidence>
<feature type="chain" id="PRO_0000128950" description="DNA-directed RNA polymerase subunit omega">
    <location>
        <begin position="1"/>
        <end position="67"/>
    </location>
</feature>
<protein>
    <recommendedName>
        <fullName evidence="1">DNA-directed RNA polymerase subunit omega</fullName>
        <shortName evidence="1">RNAP omega subunit</shortName>
        <ecNumber evidence="1">2.7.7.6</ecNumber>
    </recommendedName>
    <alternativeName>
        <fullName evidence="1">RNA polymerase omega subunit</fullName>
    </alternativeName>
    <alternativeName>
        <fullName evidence="1">Transcriptase subunit omega</fullName>
    </alternativeName>
</protein>
<organism>
    <name type="scientific">Listeria monocytogenes serovar 1/2a (strain ATCC BAA-679 / EGD-e)</name>
    <dbReference type="NCBI Taxonomy" id="169963"/>
    <lineage>
        <taxon>Bacteria</taxon>
        <taxon>Bacillati</taxon>
        <taxon>Bacillota</taxon>
        <taxon>Bacilli</taxon>
        <taxon>Bacillales</taxon>
        <taxon>Listeriaceae</taxon>
        <taxon>Listeria</taxon>
    </lineage>
</organism>
<keyword id="KW-0240">DNA-directed RNA polymerase</keyword>
<keyword id="KW-0548">Nucleotidyltransferase</keyword>
<keyword id="KW-1185">Reference proteome</keyword>
<keyword id="KW-0804">Transcription</keyword>
<keyword id="KW-0808">Transferase</keyword>